<comment type="similarity">
    <text evidence="1">Belongs to the bacterial ribosomal protein bL36 family.</text>
</comment>
<gene>
    <name evidence="1" type="primary">rpmJ</name>
    <name type="ordered locus">RER_18770</name>
</gene>
<feature type="chain" id="PRO_1000204558" description="Large ribosomal subunit protein bL36">
    <location>
        <begin position="1"/>
        <end position="37"/>
    </location>
</feature>
<evidence type="ECO:0000255" key="1">
    <source>
        <dbReference type="HAMAP-Rule" id="MF_00251"/>
    </source>
</evidence>
<evidence type="ECO:0000305" key="2"/>
<organism>
    <name type="scientific">Rhodococcus erythropolis (strain PR4 / NBRC 100887)</name>
    <dbReference type="NCBI Taxonomy" id="234621"/>
    <lineage>
        <taxon>Bacteria</taxon>
        <taxon>Bacillati</taxon>
        <taxon>Actinomycetota</taxon>
        <taxon>Actinomycetes</taxon>
        <taxon>Mycobacteriales</taxon>
        <taxon>Nocardiaceae</taxon>
        <taxon>Rhodococcus</taxon>
        <taxon>Rhodococcus erythropolis group</taxon>
    </lineage>
</organism>
<dbReference type="EMBL" id="AP008957">
    <property type="protein sequence ID" value="BAH32585.1"/>
    <property type="molecule type" value="Genomic_DNA"/>
</dbReference>
<dbReference type="RefSeq" id="WP_003938068.1">
    <property type="nucleotide sequence ID" value="NC_012490.1"/>
</dbReference>
<dbReference type="SMR" id="C0ZW50"/>
<dbReference type="GeneID" id="93803280"/>
<dbReference type="KEGG" id="rer:RER_18770"/>
<dbReference type="eggNOG" id="COG0257">
    <property type="taxonomic scope" value="Bacteria"/>
</dbReference>
<dbReference type="HOGENOM" id="CLU_135723_6_2_11"/>
<dbReference type="Proteomes" id="UP000002204">
    <property type="component" value="Chromosome"/>
</dbReference>
<dbReference type="GO" id="GO:0005737">
    <property type="term" value="C:cytoplasm"/>
    <property type="evidence" value="ECO:0007669"/>
    <property type="project" value="UniProtKB-ARBA"/>
</dbReference>
<dbReference type="GO" id="GO:1990904">
    <property type="term" value="C:ribonucleoprotein complex"/>
    <property type="evidence" value="ECO:0007669"/>
    <property type="project" value="UniProtKB-KW"/>
</dbReference>
<dbReference type="GO" id="GO:0005840">
    <property type="term" value="C:ribosome"/>
    <property type="evidence" value="ECO:0007669"/>
    <property type="project" value="UniProtKB-KW"/>
</dbReference>
<dbReference type="GO" id="GO:0003735">
    <property type="term" value="F:structural constituent of ribosome"/>
    <property type="evidence" value="ECO:0007669"/>
    <property type="project" value="InterPro"/>
</dbReference>
<dbReference type="GO" id="GO:0006412">
    <property type="term" value="P:translation"/>
    <property type="evidence" value="ECO:0007669"/>
    <property type="project" value="UniProtKB-UniRule"/>
</dbReference>
<dbReference type="HAMAP" id="MF_00251">
    <property type="entry name" value="Ribosomal_bL36"/>
    <property type="match status" value="1"/>
</dbReference>
<dbReference type="InterPro" id="IPR000473">
    <property type="entry name" value="Ribosomal_bL36"/>
</dbReference>
<dbReference type="InterPro" id="IPR035977">
    <property type="entry name" value="Ribosomal_bL36_sp"/>
</dbReference>
<dbReference type="NCBIfam" id="TIGR01022">
    <property type="entry name" value="rpmJ_bact"/>
    <property type="match status" value="1"/>
</dbReference>
<dbReference type="PANTHER" id="PTHR42888">
    <property type="entry name" value="50S RIBOSOMAL PROTEIN L36, CHLOROPLASTIC"/>
    <property type="match status" value="1"/>
</dbReference>
<dbReference type="PANTHER" id="PTHR42888:SF1">
    <property type="entry name" value="LARGE RIBOSOMAL SUBUNIT PROTEIN BL36C"/>
    <property type="match status" value="1"/>
</dbReference>
<dbReference type="Pfam" id="PF00444">
    <property type="entry name" value="Ribosomal_L36"/>
    <property type="match status" value="1"/>
</dbReference>
<dbReference type="SUPFAM" id="SSF57840">
    <property type="entry name" value="Ribosomal protein L36"/>
    <property type="match status" value="1"/>
</dbReference>
<dbReference type="PROSITE" id="PS00828">
    <property type="entry name" value="RIBOSOMAL_L36"/>
    <property type="match status" value="1"/>
</dbReference>
<reference key="1">
    <citation type="submission" date="2005-03" db="EMBL/GenBank/DDBJ databases">
        <title>Comparison of the complete genome sequences of Rhodococcus erythropolis PR4 and Rhodococcus opacus B4.</title>
        <authorList>
            <person name="Takarada H."/>
            <person name="Sekine M."/>
            <person name="Hosoyama A."/>
            <person name="Yamada R."/>
            <person name="Fujisawa T."/>
            <person name="Omata S."/>
            <person name="Shimizu A."/>
            <person name="Tsukatani N."/>
            <person name="Tanikawa S."/>
            <person name="Fujita N."/>
            <person name="Harayama S."/>
        </authorList>
    </citation>
    <scope>NUCLEOTIDE SEQUENCE [LARGE SCALE GENOMIC DNA]</scope>
    <source>
        <strain>PR4 / NBRC 100887</strain>
    </source>
</reference>
<accession>C0ZW50</accession>
<protein>
    <recommendedName>
        <fullName evidence="1">Large ribosomal subunit protein bL36</fullName>
    </recommendedName>
    <alternativeName>
        <fullName evidence="2">50S ribosomal protein L36</fullName>
    </alternativeName>
</protein>
<proteinExistence type="inferred from homology"/>
<name>RL36_RHOE4</name>
<sequence length="37" mass="4394">MKVQPSVKKICEKCKVIRRNGRVMVICENLRHKQRQG</sequence>
<keyword id="KW-0687">Ribonucleoprotein</keyword>
<keyword id="KW-0689">Ribosomal protein</keyword>